<dbReference type="EC" id="2.3.1.234" evidence="1"/>
<dbReference type="EMBL" id="CP000563">
    <property type="protein sequence ID" value="ABN60667.1"/>
    <property type="molecule type" value="Genomic_DNA"/>
</dbReference>
<dbReference type="RefSeq" id="WP_011846141.1">
    <property type="nucleotide sequence ID" value="NC_009052.1"/>
</dbReference>
<dbReference type="SMR" id="A3D1Q4"/>
<dbReference type="STRING" id="325240.Sbal_1148"/>
<dbReference type="KEGG" id="sbl:Sbal_1148"/>
<dbReference type="HOGENOM" id="CLU_023208_0_0_6"/>
<dbReference type="OrthoDB" id="9806197at2"/>
<dbReference type="Proteomes" id="UP000001557">
    <property type="component" value="Chromosome"/>
</dbReference>
<dbReference type="GO" id="GO:0005737">
    <property type="term" value="C:cytoplasm"/>
    <property type="evidence" value="ECO:0007669"/>
    <property type="project" value="UniProtKB-SubCell"/>
</dbReference>
<dbReference type="GO" id="GO:0005506">
    <property type="term" value="F:iron ion binding"/>
    <property type="evidence" value="ECO:0007669"/>
    <property type="project" value="UniProtKB-UniRule"/>
</dbReference>
<dbReference type="GO" id="GO:0061711">
    <property type="term" value="F:N(6)-L-threonylcarbamoyladenine synthase activity"/>
    <property type="evidence" value="ECO:0007669"/>
    <property type="project" value="UniProtKB-EC"/>
</dbReference>
<dbReference type="GO" id="GO:0002949">
    <property type="term" value="P:tRNA threonylcarbamoyladenosine modification"/>
    <property type="evidence" value="ECO:0007669"/>
    <property type="project" value="UniProtKB-UniRule"/>
</dbReference>
<dbReference type="CDD" id="cd24133">
    <property type="entry name" value="ASKHA_NBD_TsaD_bac"/>
    <property type="match status" value="1"/>
</dbReference>
<dbReference type="FunFam" id="3.30.420.40:FF:000031">
    <property type="entry name" value="tRNA N6-adenosine threonylcarbamoyltransferase"/>
    <property type="match status" value="1"/>
</dbReference>
<dbReference type="Gene3D" id="3.30.420.40">
    <property type="match status" value="2"/>
</dbReference>
<dbReference type="HAMAP" id="MF_01445">
    <property type="entry name" value="TsaD"/>
    <property type="match status" value="1"/>
</dbReference>
<dbReference type="InterPro" id="IPR043129">
    <property type="entry name" value="ATPase_NBD"/>
</dbReference>
<dbReference type="InterPro" id="IPR000905">
    <property type="entry name" value="Gcp-like_dom"/>
</dbReference>
<dbReference type="InterPro" id="IPR017861">
    <property type="entry name" value="KAE1/TsaD"/>
</dbReference>
<dbReference type="InterPro" id="IPR017860">
    <property type="entry name" value="Peptidase_M22_CS"/>
</dbReference>
<dbReference type="InterPro" id="IPR022450">
    <property type="entry name" value="TsaD"/>
</dbReference>
<dbReference type="NCBIfam" id="TIGR00329">
    <property type="entry name" value="gcp_kae1"/>
    <property type="match status" value="1"/>
</dbReference>
<dbReference type="NCBIfam" id="TIGR03723">
    <property type="entry name" value="T6A_TsaD_YgjD"/>
    <property type="match status" value="1"/>
</dbReference>
<dbReference type="PANTHER" id="PTHR11735">
    <property type="entry name" value="TRNA N6-ADENOSINE THREONYLCARBAMOYLTRANSFERASE"/>
    <property type="match status" value="1"/>
</dbReference>
<dbReference type="PANTHER" id="PTHR11735:SF6">
    <property type="entry name" value="TRNA N6-ADENOSINE THREONYLCARBAMOYLTRANSFERASE, MITOCHONDRIAL"/>
    <property type="match status" value="1"/>
</dbReference>
<dbReference type="Pfam" id="PF00814">
    <property type="entry name" value="TsaD"/>
    <property type="match status" value="1"/>
</dbReference>
<dbReference type="PRINTS" id="PR00789">
    <property type="entry name" value="OSIALOPTASE"/>
</dbReference>
<dbReference type="SUPFAM" id="SSF53067">
    <property type="entry name" value="Actin-like ATPase domain"/>
    <property type="match status" value="2"/>
</dbReference>
<dbReference type="PROSITE" id="PS01016">
    <property type="entry name" value="GLYCOPROTEASE"/>
    <property type="match status" value="1"/>
</dbReference>
<protein>
    <recommendedName>
        <fullName evidence="1">tRNA N6-adenosine threonylcarbamoyltransferase</fullName>
        <ecNumber evidence="1">2.3.1.234</ecNumber>
    </recommendedName>
    <alternativeName>
        <fullName evidence="1">N6-L-threonylcarbamoyladenine synthase</fullName>
        <shortName evidence="1">t(6)A synthase</shortName>
    </alternativeName>
    <alternativeName>
        <fullName evidence="1">t(6)A37 threonylcarbamoyladenosine biosynthesis protein TsaD</fullName>
    </alternativeName>
    <alternativeName>
        <fullName evidence="1">tRNA threonylcarbamoyladenosine biosynthesis protein TsaD</fullName>
    </alternativeName>
</protein>
<reference key="1">
    <citation type="submission" date="2007-02" db="EMBL/GenBank/DDBJ databases">
        <title>Complete sequence of chromosome of Shewanella baltica OS155.</title>
        <authorList>
            <consortium name="US DOE Joint Genome Institute"/>
            <person name="Copeland A."/>
            <person name="Lucas S."/>
            <person name="Lapidus A."/>
            <person name="Barry K."/>
            <person name="Detter J.C."/>
            <person name="Glavina del Rio T."/>
            <person name="Hammon N."/>
            <person name="Israni S."/>
            <person name="Dalin E."/>
            <person name="Tice H."/>
            <person name="Pitluck S."/>
            <person name="Sims D.R."/>
            <person name="Brettin T."/>
            <person name="Bruce D."/>
            <person name="Han C."/>
            <person name="Tapia R."/>
            <person name="Brainard J."/>
            <person name="Schmutz J."/>
            <person name="Larimer F."/>
            <person name="Land M."/>
            <person name="Hauser L."/>
            <person name="Kyrpides N."/>
            <person name="Mikhailova N."/>
            <person name="Brettar I."/>
            <person name="Klappenbach J."/>
            <person name="Konstantinidis K."/>
            <person name="Rodrigues J."/>
            <person name="Tiedje J."/>
            <person name="Richardson P."/>
        </authorList>
    </citation>
    <scope>NUCLEOTIDE SEQUENCE [LARGE SCALE GENOMIC DNA]</scope>
    <source>
        <strain>OS155 / ATCC BAA-1091</strain>
    </source>
</reference>
<sequence length="338" mass="36288">MRVLGIETSCDETGIAVYDDELGLLSHTLYSQVKLHADYGGVVPELASRDHVRKIVPLIRQALKDANTEMADLDGIAYTKGPGLIGALLVGACVGRSLAFAWDKPAIGVHHMEGHLLAPMLEDDAPEFPFVALLVSGGHSMLVKVDGIGRYEVLGESVDDAAGEAFDKTAKLMGLDYPGGPRLAKLAAKGLPAGYKFPRPMTDRPGLDFSFSGLKTFTANTIAAEPDDEQTRANIARAFEEAVVDTLAIKCRRALKQTGYNRLVIAGGVSANTRLRETLAEMMNSLGGQVFYPRGEFCTDNGAMIAFSGLQRLKAGQYEDLAVKGQPRWPLDTLPPVA</sequence>
<gene>
    <name evidence="1" type="primary">tsaD</name>
    <name type="synonym">gcp</name>
    <name type="ordered locus">Sbal_1148</name>
</gene>
<proteinExistence type="inferred from homology"/>
<keyword id="KW-0012">Acyltransferase</keyword>
<keyword id="KW-0963">Cytoplasm</keyword>
<keyword id="KW-0408">Iron</keyword>
<keyword id="KW-0479">Metal-binding</keyword>
<keyword id="KW-1185">Reference proteome</keyword>
<keyword id="KW-0808">Transferase</keyword>
<keyword id="KW-0819">tRNA processing</keyword>
<evidence type="ECO:0000255" key="1">
    <source>
        <dbReference type="HAMAP-Rule" id="MF_01445"/>
    </source>
</evidence>
<organism>
    <name type="scientific">Shewanella baltica (strain OS155 / ATCC BAA-1091)</name>
    <dbReference type="NCBI Taxonomy" id="325240"/>
    <lineage>
        <taxon>Bacteria</taxon>
        <taxon>Pseudomonadati</taxon>
        <taxon>Pseudomonadota</taxon>
        <taxon>Gammaproteobacteria</taxon>
        <taxon>Alteromonadales</taxon>
        <taxon>Shewanellaceae</taxon>
        <taxon>Shewanella</taxon>
    </lineage>
</organism>
<name>TSAD_SHEB5</name>
<accession>A3D1Q4</accession>
<comment type="function">
    <text evidence="1">Required for the formation of a threonylcarbamoyl group on adenosine at position 37 (t(6)A37) in tRNAs that read codons beginning with adenine. Is involved in the transfer of the threonylcarbamoyl moiety of threonylcarbamoyl-AMP (TC-AMP) to the N6 group of A37, together with TsaE and TsaB. TsaD likely plays a direct catalytic role in this reaction.</text>
</comment>
<comment type="catalytic activity">
    <reaction evidence="1">
        <text>L-threonylcarbamoyladenylate + adenosine(37) in tRNA = N(6)-L-threonylcarbamoyladenosine(37) in tRNA + AMP + H(+)</text>
        <dbReference type="Rhea" id="RHEA:37059"/>
        <dbReference type="Rhea" id="RHEA-COMP:10162"/>
        <dbReference type="Rhea" id="RHEA-COMP:10163"/>
        <dbReference type="ChEBI" id="CHEBI:15378"/>
        <dbReference type="ChEBI" id="CHEBI:73682"/>
        <dbReference type="ChEBI" id="CHEBI:74411"/>
        <dbReference type="ChEBI" id="CHEBI:74418"/>
        <dbReference type="ChEBI" id="CHEBI:456215"/>
        <dbReference type="EC" id="2.3.1.234"/>
    </reaction>
</comment>
<comment type="cofactor">
    <cofactor evidence="1">
        <name>Fe(2+)</name>
        <dbReference type="ChEBI" id="CHEBI:29033"/>
    </cofactor>
    <text evidence="1">Binds 1 Fe(2+) ion per subunit.</text>
</comment>
<comment type="subcellular location">
    <subcellularLocation>
        <location evidence="1">Cytoplasm</location>
    </subcellularLocation>
</comment>
<comment type="similarity">
    <text evidence="1">Belongs to the KAE1 / TsaD family.</text>
</comment>
<feature type="chain" id="PRO_1000024451" description="tRNA N6-adenosine threonylcarbamoyltransferase">
    <location>
        <begin position="1"/>
        <end position="338"/>
    </location>
</feature>
<feature type="binding site" evidence="1">
    <location>
        <position position="111"/>
    </location>
    <ligand>
        <name>Fe cation</name>
        <dbReference type="ChEBI" id="CHEBI:24875"/>
    </ligand>
</feature>
<feature type="binding site" evidence="1">
    <location>
        <position position="115"/>
    </location>
    <ligand>
        <name>Fe cation</name>
        <dbReference type="ChEBI" id="CHEBI:24875"/>
    </ligand>
</feature>
<feature type="binding site" evidence="1">
    <location>
        <begin position="134"/>
        <end position="138"/>
    </location>
    <ligand>
        <name>substrate</name>
    </ligand>
</feature>
<feature type="binding site" evidence="1">
    <location>
        <position position="167"/>
    </location>
    <ligand>
        <name>substrate</name>
    </ligand>
</feature>
<feature type="binding site" evidence="1">
    <location>
        <position position="180"/>
    </location>
    <ligand>
        <name>substrate</name>
    </ligand>
</feature>
<feature type="binding site" evidence="1">
    <location>
        <position position="272"/>
    </location>
    <ligand>
        <name>substrate</name>
    </ligand>
</feature>
<feature type="binding site" evidence="1">
    <location>
        <position position="300"/>
    </location>
    <ligand>
        <name>Fe cation</name>
        <dbReference type="ChEBI" id="CHEBI:24875"/>
    </ligand>
</feature>